<proteinExistence type="inferred from homology"/>
<comment type="function">
    <text evidence="1">Catalyzes the attachment of alanine to tRNA(Ala) in a two-step reaction: alanine is first activated by ATP to form Ala-AMP and then transferred to the acceptor end of tRNA(Ala). Also edits incorrectly charged Ser-tRNA(Ala) and Gly-tRNA(Ala) via its editing domain.</text>
</comment>
<comment type="catalytic activity">
    <reaction evidence="1">
        <text>tRNA(Ala) + L-alanine + ATP = L-alanyl-tRNA(Ala) + AMP + diphosphate</text>
        <dbReference type="Rhea" id="RHEA:12540"/>
        <dbReference type="Rhea" id="RHEA-COMP:9657"/>
        <dbReference type="Rhea" id="RHEA-COMP:9923"/>
        <dbReference type="ChEBI" id="CHEBI:30616"/>
        <dbReference type="ChEBI" id="CHEBI:33019"/>
        <dbReference type="ChEBI" id="CHEBI:57972"/>
        <dbReference type="ChEBI" id="CHEBI:78442"/>
        <dbReference type="ChEBI" id="CHEBI:78497"/>
        <dbReference type="ChEBI" id="CHEBI:456215"/>
        <dbReference type="EC" id="6.1.1.7"/>
    </reaction>
</comment>
<comment type="cofactor">
    <cofactor evidence="1">
        <name>Zn(2+)</name>
        <dbReference type="ChEBI" id="CHEBI:29105"/>
    </cofactor>
    <text evidence="1">Binds 1 zinc ion per subunit.</text>
</comment>
<comment type="subcellular location">
    <subcellularLocation>
        <location evidence="1">Cytoplasm</location>
    </subcellularLocation>
</comment>
<comment type="domain">
    <text evidence="1">Consists of three domains; the N-terminal catalytic domain, the editing domain and the C-terminal C-Ala domain. The editing domain removes incorrectly charged amino acids, while the C-Ala domain, along with tRNA(Ala), serves as a bridge to cooperatively bring together the editing and aminoacylation centers thus stimulating deacylation of misacylated tRNAs.</text>
</comment>
<comment type="similarity">
    <text evidence="1">Belongs to the class-II aminoacyl-tRNA synthetase family.</text>
</comment>
<protein>
    <recommendedName>
        <fullName evidence="1">Alanine--tRNA ligase</fullName>
        <ecNumber evidence="1">6.1.1.7</ecNumber>
    </recommendedName>
    <alternativeName>
        <fullName evidence="1">Alanyl-tRNA synthetase</fullName>
        <shortName evidence="1">AlaRS</shortName>
    </alternativeName>
</protein>
<gene>
    <name evidence="1" type="primary">alaS</name>
    <name type="ordered locus">PAM_305</name>
</gene>
<feature type="chain" id="PRO_0000075165" description="Alanine--tRNA ligase">
    <location>
        <begin position="1"/>
        <end position="864"/>
    </location>
</feature>
<feature type="binding site" evidence="1">
    <location>
        <position position="534"/>
    </location>
    <ligand>
        <name>Zn(2+)</name>
        <dbReference type="ChEBI" id="CHEBI:29105"/>
    </ligand>
</feature>
<feature type="binding site" evidence="1">
    <location>
        <position position="538"/>
    </location>
    <ligand>
        <name>Zn(2+)</name>
        <dbReference type="ChEBI" id="CHEBI:29105"/>
    </ligand>
</feature>
<feature type="binding site" evidence="1">
    <location>
        <position position="639"/>
    </location>
    <ligand>
        <name>Zn(2+)</name>
        <dbReference type="ChEBI" id="CHEBI:29105"/>
    </ligand>
</feature>
<feature type="binding site" evidence="1">
    <location>
        <position position="643"/>
    </location>
    <ligand>
        <name>Zn(2+)</name>
        <dbReference type="ChEBI" id="CHEBI:29105"/>
    </ligand>
</feature>
<keyword id="KW-0030">Aminoacyl-tRNA synthetase</keyword>
<keyword id="KW-0067">ATP-binding</keyword>
<keyword id="KW-0963">Cytoplasm</keyword>
<keyword id="KW-0436">Ligase</keyword>
<keyword id="KW-0479">Metal-binding</keyword>
<keyword id="KW-0547">Nucleotide-binding</keyword>
<keyword id="KW-0648">Protein biosynthesis</keyword>
<keyword id="KW-0694">RNA-binding</keyword>
<keyword id="KW-0820">tRNA-binding</keyword>
<keyword id="KW-0862">Zinc</keyword>
<name>SYA_ONYPE</name>
<sequence>MTSFEIRQMWLKFFASKNHHIAKSSSLIPRNEANLLWVNAGITPLKKYFDGTQTPPFRRITNVQKCIRTNDIKNVGKTSRHHTFFEMLGNFSIGNYFKKEAIHYAFELLTSPKWFAFPLEKLYITYFFQDQDTYQYWLDLGVEKNHLIPLKSNFWQIGPGPSGPCTEIFFDRGKTFDPRNKELIIQDLENDRFIEIWNIVFSQYNCDPKLPIEKYQELPSKNIDTGAGLERLACILQNTKTNFETDLFFPLIKALEKMTQIKYTGQESFKIIADHLKTLVFAINDGAVLTNEKRGYVLKKLLRRAANEGKKLGLDKPFLHQLVPPTAAMMKDFYKELCTNQEIIAKVLLQQENIFEQTLKTAEKTFLQHLTQNTLSGQNFFKLYDTYGIPEDLILDYAKKKNITTDYQKFQELLHDHQNLSKQNQTSQIHMNKQEESFLQFLTPSEFIGYTNFTCKTKVIKVFDKGIVLEKTPFYANMGGQIEDEGWIDNTKVTKITKLPNGQILHEVQGNFCEGQEVYACIEKTKRNQISYHHTATHLLEAVLQKQLGSHLKKQGSSVGFSSLRYDFNHFEKITPQTLLQIEKEVNQLIQKSVPVKIEQLSIPDAQKKYATLLEQNQKAKYKDKVRIVSIDTFSVDLCGGTHATNTKDLEHFTILSCESISSGIYRIEAVCNNNCQESLNAKLVPYQNDLHQLTQKAKSLQTQNLIFDVKNFPPITQSYQDILNYQKHIKAQQQALVLFEKKVLEYHQKNMVQAESNFLPPQITKKMMLTIEEEKPLEVLKFFMNHIFDKYHLEVLFLSYVQPEKIVFLCKSKTLHAGNLIKEAVSLVCGSGGGNASLAQGGTKKTKNLEQVLNFVKTKLEIN</sequence>
<organism>
    <name type="scientific">Onion yellows phytoplasma (strain OY-M)</name>
    <dbReference type="NCBI Taxonomy" id="262768"/>
    <lineage>
        <taxon>Bacteria</taxon>
        <taxon>Bacillati</taxon>
        <taxon>Mycoplasmatota</taxon>
        <taxon>Mollicutes</taxon>
        <taxon>Acholeplasmatales</taxon>
        <taxon>Acholeplasmataceae</taxon>
        <taxon>Candidatus Phytoplasma</taxon>
        <taxon>16SrI (Aster yellows group)</taxon>
    </lineage>
</organism>
<evidence type="ECO:0000255" key="1">
    <source>
        <dbReference type="HAMAP-Rule" id="MF_00036"/>
    </source>
</evidence>
<accession>Q6YQR8</accession>
<dbReference type="EC" id="6.1.1.7" evidence="1"/>
<dbReference type="EMBL" id="AP006628">
    <property type="protein sequence ID" value="BAD04390.1"/>
    <property type="molecule type" value="Genomic_DNA"/>
</dbReference>
<dbReference type="SMR" id="Q6YQR8"/>
<dbReference type="STRING" id="262768.PAM_305"/>
<dbReference type="KEGG" id="poy:PAM_305"/>
<dbReference type="eggNOG" id="COG0013">
    <property type="taxonomic scope" value="Bacteria"/>
</dbReference>
<dbReference type="HOGENOM" id="CLU_004485_1_1_14"/>
<dbReference type="BioCyc" id="OYEL262768:G1G26-364-MONOMER"/>
<dbReference type="Proteomes" id="UP000002523">
    <property type="component" value="Chromosome"/>
</dbReference>
<dbReference type="GO" id="GO:0005829">
    <property type="term" value="C:cytosol"/>
    <property type="evidence" value="ECO:0007669"/>
    <property type="project" value="TreeGrafter"/>
</dbReference>
<dbReference type="GO" id="GO:0004813">
    <property type="term" value="F:alanine-tRNA ligase activity"/>
    <property type="evidence" value="ECO:0007669"/>
    <property type="project" value="UniProtKB-UniRule"/>
</dbReference>
<dbReference type="GO" id="GO:0002161">
    <property type="term" value="F:aminoacyl-tRNA deacylase activity"/>
    <property type="evidence" value="ECO:0007669"/>
    <property type="project" value="TreeGrafter"/>
</dbReference>
<dbReference type="GO" id="GO:0005524">
    <property type="term" value="F:ATP binding"/>
    <property type="evidence" value="ECO:0007669"/>
    <property type="project" value="UniProtKB-UniRule"/>
</dbReference>
<dbReference type="GO" id="GO:0000049">
    <property type="term" value="F:tRNA binding"/>
    <property type="evidence" value="ECO:0007669"/>
    <property type="project" value="UniProtKB-KW"/>
</dbReference>
<dbReference type="GO" id="GO:0008270">
    <property type="term" value="F:zinc ion binding"/>
    <property type="evidence" value="ECO:0007669"/>
    <property type="project" value="UniProtKB-UniRule"/>
</dbReference>
<dbReference type="GO" id="GO:0006419">
    <property type="term" value="P:alanyl-tRNA aminoacylation"/>
    <property type="evidence" value="ECO:0007669"/>
    <property type="project" value="UniProtKB-UniRule"/>
</dbReference>
<dbReference type="CDD" id="cd00673">
    <property type="entry name" value="AlaRS_core"/>
    <property type="match status" value="1"/>
</dbReference>
<dbReference type="FunFam" id="3.30.930.10:FF:000046">
    <property type="entry name" value="Alanine--tRNA ligase"/>
    <property type="match status" value="1"/>
</dbReference>
<dbReference type="FunFam" id="3.30.980.10:FF:000004">
    <property type="entry name" value="Alanine--tRNA ligase, cytoplasmic"/>
    <property type="match status" value="1"/>
</dbReference>
<dbReference type="Gene3D" id="2.40.30.130">
    <property type="match status" value="1"/>
</dbReference>
<dbReference type="Gene3D" id="3.10.310.40">
    <property type="match status" value="1"/>
</dbReference>
<dbReference type="Gene3D" id="3.30.930.10">
    <property type="entry name" value="Bira Bifunctional Protein, Domain 2"/>
    <property type="match status" value="1"/>
</dbReference>
<dbReference type="Gene3D" id="3.30.980.10">
    <property type="entry name" value="Threonyl-trna Synthetase, Chain A, domain 2"/>
    <property type="match status" value="1"/>
</dbReference>
<dbReference type="HAMAP" id="MF_00036_B">
    <property type="entry name" value="Ala_tRNA_synth_B"/>
    <property type="match status" value="1"/>
</dbReference>
<dbReference type="InterPro" id="IPR045864">
    <property type="entry name" value="aa-tRNA-synth_II/BPL/LPL"/>
</dbReference>
<dbReference type="InterPro" id="IPR002318">
    <property type="entry name" value="Ala-tRNA-lgiase_IIc"/>
</dbReference>
<dbReference type="InterPro" id="IPR018162">
    <property type="entry name" value="Ala-tRNA-ligase_IIc_anticod-bd"/>
</dbReference>
<dbReference type="InterPro" id="IPR018165">
    <property type="entry name" value="Ala-tRNA-synth_IIc_core"/>
</dbReference>
<dbReference type="InterPro" id="IPR018164">
    <property type="entry name" value="Ala-tRNA-synth_IIc_N"/>
</dbReference>
<dbReference type="InterPro" id="IPR050058">
    <property type="entry name" value="Ala-tRNA_ligase"/>
</dbReference>
<dbReference type="InterPro" id="IPR023033">
    <property type="entry name" value="Ala_tRNA_ligase_euk/bac"/>
</dbReference>
<dbReference type="InterPro" id="IPR003156">
    <property type="entry name" value="DHHA1_dom"/>
</dbReference>
<dbReference type="InterPro" id="IPR018163">
    <property type="entry name" value="Thr/Ala-tRNA-synth_IIc_edit"/>
</dbReference>
<dbReference type="InterPro" id="IPR009000">
    <property type="entry name" value="Transl_B-barrel_sf"/>
</dbReference>
<dbReference type="InterPro" id="IPR012947">
    <property type="entry name" value="tRNA_SAD"/>
</dbReference>
<dbReference type="NCBIfam" id="TIGR00344">
    <property type="entry name" value="alaS"/>
    <property type="match status" value="1"/>
</dbReference>
<dbReference type="PANTHER" id="PTHR11777:SF9">
    <property type="entry name" value="ALANINE--TRNA LIGASE, CYTOPLASMIC"/>
    <property type="match status" value="1"/>
</dbReference>
<dbReference type="PANTHER" id="PTHR11777">
    <property type="entry name" value="ALANYL-TRNA SYNTHETASE"/>
    <property type="match status" value="1"/>
</dbReference>
<dbReference type="Pfam" id="PF02272">
    <property type="entry name" value="DHHA1"/>
    <property type="match status" value="1"/>
</dbReference>
<dbReference type="Pfam" id="PF01411">
    <property type="entry name" value="tRNA-synt_2c"/>
    <property type="match status" value="1"/>
</dbReference>
<dbReference type="Pfam" id="PF07973">
    <property type="entry name" value="tRNA_SAD"/>
    <property type="match status" value="1"/>
</dbReference>
<dbReference type="PRINTS" id="PR00980">
    <property type="entry name" value="TRNASYNTHALA"/>
</dbReference>
<dbReference type="SMART" id="SM00863">
    <property type="entry name" value="tRNA_SAD"/>
    <property type="match status" value="1"/>
</dbReference>
<dbReference type="SUPFAM" id="SSF55681">
    <property type="entry name" value="Class II aaRS and biotin synthetases"/>
    <property type="match status" value="1"/>
</dbReference>
<dbReference type="SUPFAM" id="SSF101353">
    <property type="entry name" value="Putative anticodon-binding domain of alanyl-tRNA synthetase (AlaRS)"/>
    <property type="match status" value="1"/>
</dbReference>
<dbReference type="SUPFAM" id="SSF55186">
    <property type="entry name" value="ThrRS/AlaRS common domain"/>
    <property type="match status" value="1"/>
</dbReference>
<dbReference type="SUPFAM" id="SSF50447">
    <property type="entry name" value="Translation proteins"/>
    <property type="match status" value="1"/>
</dbReference>
<dbReference type="PROSITE" id="PS50860">
    <property type="entry name" value="AA_TRNA_LIGASE_II_ALA"/>
    <property type="match status" value="1"/>
</dbReference>
<reference key="1">
    <citation type="journal article" date="2004" name="Nat. Genet.">
        <title>Reductive evolution suggested from the complete genome sequence of a plant-pathogenic phytoplasma.</title>
        <authorList>
            <person name="Oshima K."/>
            <person name="Kakizawa S."/>
            <person name="Nishigawa H."/>
            <person name="Jung H.-Y."/>
            <person name="Wei W."/>
            <person name="Suzuki S."/>
            <person name="Arashida R."/>
            <person name="Nakata D."/>
            <person name="Miyata S."/>
            <person name="Ugaki M."/>
            <person name="Namba S."/>
        </authorList>
    </citation>
    <scope>NUCLEOTIDE SEQUENCE [LARGE SCALE GENOMIC DNA]</scope>
    <source>
        <strain>OY-M</strain>
    </source>
</reference>